<reference key="1">
    <citation type="submission" date="2006-12" db="EMBL/GenBank/DDBJ databases">
        <title>Complete sequence of Chlorobium phaeobacteroides DSM 266.</title>
        <authorList>
            <consortium name="US DOE Joint Genome Institute"/>
            <person name="Copeland A."/>
            <person name="Lucas S."/>
            <person name="Lapidus A."/>
            <person name="Barry K."/>
            <person name="Detter J.C."/>
            <person name="Glavina del Rio T."/>
            <person name="Hammon N."/>
            <person name="Israni S."/>
            <person name="Pitluck S."/>
            <person name="Goltsman E."/>
            <person name="Schmutz J."/>
            <person name="Larimer F."/>
            <person name="Land M."/>
            <person name="Hauser L."/>
            <person name="Mikhailova N."/>
            <person name="Li T."/>
            <person name="Overmann J."/>
            <person name="Bryant D.A."/>
            <person name="Richardson P."/>
        </authorList>
    </citation>
    <scope>NUCLEOTIDE SEQUENCE [LARGE SCALE GENOMIC DNA]</scope>
    <source>
        <strain>DSM 266 / SMG 266 / 2430</strain>
    </source>
</reference>
<evidence type="ECO:0000255" key="1">
    <source>
        <dbReference type="HAMAP-Rule" id="MF_00358"/>
    </source>
</evidence>
<evidence type="ECO:0000256" key="2">
    <source>
        <dbReference type="SAM" id="MobiDB-lite"/>
    </source>
</evidence>
<evidence type="ECO:0000305" key="3"/>
<dbReference type="EMBL" id="CP000492">
    <property type="protein sequence ID" value="ABL66270.1"/>
    <property type="molecule type" value="Genomic_DNA"/>
</dbReference>
<dbReference type="RefSeq" id="WP_011746061.1">
    <property type="nucleotide sequence ID" value="NC_008639.1"/>
</dbReference>
<dbReference type="SMR" id="A1BIP3"/>
<dbReference type="STRING" id="290317.Cpha266_2278"/>
<dbReference type="KEGG" id="cph:Cpha266_2278"/>
<dbReference type="eggNOG" id="COG0828">
    <property type="taxonomic scope" value="Bacteria"/>
</dbReference>
<dbReference type="HOGENOM" id="CLU_159258_2_1_10"/>
<dbReference type="OrthoDB" id="598353at2"/>
<dbReference type="Proteomes" id="UP000008701">
    <property type="component" value="Chromosome"/>
</dbReference>
<dbReference type="GO" id="GO:1990904">
    <property type="term" value="C:ribonucleoprotein complex"/>
    <property type="evidence" value="ECO:0007669"/>
    <property type="project" value="UniProtKB-KW"/>
</dbReference>
<dbReference type="GO" id="GO:0005840">
    <property type="term" value="C:ribosome"/>
    <property type="evidence" value="ECO:0007669"/>
    <property type="project" value="UniProtKB-KW"/>
</dbReference>
<dbReference type="GO" id="GO:0003735">
    <property type="term" value="F:structural constituent of ribosome"/>
    <property type="evidence" value="ECO:0007669"/>
    <property type="project" value="InterPro"/>
</dbReference>
<dbReference type="GO" id="GO:0006412">
    <property type="term" value="P:translation"/>
    <property type="evidence" value="ECO:0007669"/>
    <property type="project" value="UniProtKB-UniRule"/>
</dbReference>
<dbReference type="Gene3D" id="1.20.5.1150">
    <property type="entry name" value="Ribosomal protein S8"/>
    <property type="match status" value="1"/>
</dbReference>
<dbReference type="HAMAP" id="MF_00358">
    <property type="entry name" value="Ribosomal_bS21"/>
    <property type="match status" value="1"/>
</dbReference>
<dbReference type="InterPro" id="IPR001911">
    <property type="entry name" value="Ribosomal_bS21"/>
</dbReference>
<dbReference type="InterPro" id="IPR038380">
    <property type="entry name" value="Ribosomal_bS21_sf"/>
</dbReference>
<dbReference type="NCBIfam" id="TIGR00030">
    <property type="entry name" value="S21p"/>
    <property type="match status" value="1"/>
</dbReference>
<dbReference type="Pfam" id="PF01165">
    <property type="entry name" value="Ribosomal_S21"/>
    <property type="match status" value="1"/>
</dbReference>
<dbReference type="PRINTS" id="PR00976">
    <property type="entry name" value="RIBOSOMALS21"/>
</dbReference>
<organism>
    <name type="scientific">Chlorobium phaeobacteroides (strain DSM 266 / SMG 266 / 2430)</name>
    <dbReference type="NCBI Taxonomy" id="290317"/>
    <lineage>
        <taxon>Bacteria</taxon>
        <taxon>Pseudomonadati</taxon>
        <taxon>Chlorobiota</taxon>
        <taxon>Chlorobiia</taxon>
        <taxon>Chlorobiales</taxon>
        <taxon>Chlorobiaceae</taxon>
        <taxon>Chlorobium/Pelodictyon group</taxon>
        <taxon>Chlorobium</taxon>
    </lineage>
</organism>
<comment type="similarity">
    <text evidence="1">Belongs to the bacterial ribosomal protein bS21 family.</text>
</comment>
<keyword id="KW-1185">Reference proteome</keyword>
<keyword id="KW-0687">Ribonucleoprotein</keyword>
<keyword id="KW-0689">Ribosomal protein</keyword>
<accession>A1BIP3</accession>
<feature type="chain" id="PRO_1000005107" description="Small ribosomal subunit protein bS21">
    <location>
        <begin position="1"/>
        <end position="65"/>
    </location>
</feature>
<feature type="region of interest" description="Disordered" evidence="2">
    <location>
        <begin position="45"/>
        <end position="65"/>
    </location>
</feature>
<feature type="compositionally biased region" description="Basic residues" evidence="2">
    <location>
        <begin position="48"/>
        <end position="57"/>
    </location>
</feature>
<sequence>MVSVQINDNESIDKMLKRFKKKYERAGVLKEFRKKAYFVKPSVDGRLKRSRSRRRAQRANEERNS</sequence>
<protein>
    <recommendedName>
        <fullName evidence="1">Small ribosomal subunit protein bS21</fullName>
    </recommendedName>
    <alternativeName>
        <fullName evidence="3">30S ribosomal protein S21</fullName>
    </alternativeName>
</protein>
<gene>
    <name evidence="1" type="primary">rpsU</name>
    <name type="ordered locus">Cpha266_2278</name>
</gene>
<proteinExistence type="inferred from homology"/>
<name>RS21_CHLPD</name>